<comment type="function">
    <text evidence="1">Heme-dependent dioxygenase that catalyzes the oxidative cleavage of the L-tryptophan (L-Trp) pyrrole ring and converts L-tryptophan to N-formyl-L-kynurenine. Catalyzes the oxidative cleavage of the indole moiety.</text>
</comment>
<comment type="catalytic activity">
    <reaction evidence="1">
        <text>L-tryptophan + O2 = N-formyl-L-kynurenine</text>
        <dbReference type="Rhea" id="RHEA:24536"/>
        <dbReference type="ChEBI" id="CHEBI:15379"/>
        <dbReference type="ChEBI" id="CHEBI:57912"/>
        <dbReference type="ChEBI" id="CHEBI:58629"/>
        <dbReference type="EC" id="1.13.11.11"/>
    </reaction>
</comment>
<comment type="cofactor">
    <cofactor evidence="1">
        <name>heme</name>
        <dbReference type="ChEBI" id="CHEBI:30413"/>
    </cofactor>
    <text evidence="1">Binds 1 heme group per subunit.</text>
</comment>
<comment type="pathway">
    <text evidence="1">Amino-acid degradation; L-tryptophan degradation via kynurenine pathway; L-kynurenine from L-tryptophan: step 1/2.</text>
</comment>
<comment type="subunit">
    <text evidence="1">Homotetramer.</text>
</comment>
<comment type="similarity">
    <text evidence="1">Belongs to the tryptophan 2,3-dioxygenase family.</text>
</comment>
<evidence type="ECO:0000255" key="1">
    <source>
        <dbReference type="HAMAP-Rule" id="MF_01972"/>
    </source>
</evidence>
<feature type="chain" id="PRO_0000360122" description="Tryptophan 2,3-dioxygenase">
    <location>
        <begin position="1"/>
        <end position="294"/>
    </location>
</feature>
<feature type="binding site" evidence="1">
    <location>
        <begin position="63"/>
        <end position="67"/>
    </location>
    <ligand>
        <name>substrate</name>
    </ligand>
</feature>
<feature type="binding site" evidence="1">
    <location>
        <position position="125"/>
    </location>
    <ligand>
        <name>substrate</name>
    </ligand>
</feature>
<feature type="binding site" evidence="1">
    <location>
        <position position="129"/>
    </location>
    <ligand>
        <name>substrate</name>
    </ligand>
</feature>
<feature type="binding site" description="axial binding residue" evidence="1">
    <location>
        <position position="252"/>
    </location>
    <ligand>
        <name>heme</name>
        <dbReference type="ChEBI" id="CHEBI:30413"/>
    </ligand>
    <ligandPart>
        <name>Fe</name>
        <dbReference type="ChEBI" id="CHEBI:18248"/>
    </ligandPart>
</feature>
<feature type="binding site" evidence="1">
    <location>
        <position position="266"/>
    </location>
    <ligand>
        <name>substrate</name>
    </ligand>
</feature>
<gene>
    <name evidence="1" type="primary">kynA</name>
    <name type="ordered locus">Bpro_3590</name>
</gene>
<protein>
    <recommendedName>
        <fullName evidence="1">Tryptophan 2,3-dioxygenase</fullName>
        <shortName evidence="1">TDO</shortName>
        <ecNumber evidence="1">1.13.11.11</ecNumber>
    </recommendedName>
    <alternativeName>
        <fullName evidence="1">Tryptamin 2,3-dioxygenase</fullName>
    </alternativeName>
    <alternativeName>
        <fullName evidence="1">Tryptophan oxygenase</fullName>
        <shortName evidence="1">TO</shortName>
        <shortName evidence="1">TRPO</shortName>
    </alternativeName>
    <alternativeName>
        <fullName evidence="1">Tryptophan pyrrolase</fullName>
    </alternativeName>
    <alternativeName>
        <fullName evidence="1">Tryptophanase</fullName>
    </alternativeName>
</protein>
<accession>Q126P7</accession>
<proteinExistence type="inferred from homology"/>
<dbReference type="EC" id="1.13.11.11" evidence="1"/>
<dbReference type="EMBL" id="CP000316">
    <property type="protein sequence ID" value="ABE45495.1"/>
    <property type="molecule type" value="Genomic_DNA"/>
</dbReference>
<dbReference type="RefSeq" id="WP_011484489.1">
    <property type="nucleotide sequence ID" value="NC_007948.1"/>
</dbReference>
<dbReference type="SMR" id="Q126P7"/>
<dbReference type="STRING" id="296591.Bpro_3590"/>
<dbReference type="KEGG" id="pol:Bpro_3590"/>
<dbReference type="eggNOG" id="COG3483">
    <property type="taxonomic scope" value="Bacteria"/>
</dbReference>
<dbReference type="HOGENOM" id="CLU_063240_0_0_4"/>
<dbReference type="OrthoDB" id="9776847at2"/>
<dbReference type="UniPathway" id="UPA00333">
    <property type="reaction ID" value="UER00453"/>
</dbReference>
<dbReference type="Proteomes" id="UP000001983">
    <property type="component" value="Chromosome"/>
</dbReference>
<dbReference type="GO" id="GO:0020037">
    <property type="term" value="F:heme binding"/>
    <property type="evidence" value="ECO:0000250"/>
    <property type="project" value="UniProtKB"/>
</dbReference>
<dbReference type="GO" id="GO:0046872">
    <property type="term" value="F:metal ion binding"/>
    <property type="evidence" value="ECO:0007669"/>
    <property type="project" value="UniProtKB-KW"/>
</dbReference>
<dbReference type="GO" id="GO:0004833">
    <property type="term" value="F:tryptophan 2,3-dioxygenase activity"/>
    <property type="evidence" value="ECO:0000250"/>
    <property type="project" value="UniProtKB"/>
</dbReference>
<dbReference type="GO" id="GO:0019442">
    <property type="term" value="P:L-tryptophan catabolic process to acetyl-CoA"/>
    <property type="evidence" value="ECO:0007669"/>
    <property type="project" value="TreeGrafter"/>
</dbReference>
<dbReference type="GO" id="GO:0019441">
    <property type="term" value="P:L-tryptophan catabolic process to kynurenine"/>
    <property type="evidence" value="ECO:0000250"/>
    <property type="project" value="UniProtKB"/>
</dbReference>
<dbReference type="FunFam" id="1.20.58.480:FF:000001">
    <property type="entry name" value="Tryptophan 2,3-dioxygenase"/>
    <property type="match status" value="1"/>
</dbReference>
<dbReference type="Gene3D" id="1.20.58.480">
    <property type="match status" value="1"/>
</dbReference>
<dbReference type="HAMAP" id="MF_01972">
    <property type="entry name" value="T23O"/>
    <property type="match status" value="1"/>
</dbReference>
<dbReference type="InterPro" id="IPR037217">
    <property type="entry name" value="Trp/Indoleamine_2_3_dOase-like"/>
</dbReference>
<dbReference type="InterPro" id="IPR017485">
    <property type="entry name" value="Trp_2-3-dOase_bac"/>
</dbReference>
<dbReference type="InterPro" id="IPR004981">
    <property type="entry name" value="Trp_2_3_dOase"/>
</dbReference>
<dbReference type="NCBIfam" id="TIGR03036">
    <property type="entry name" value="trp_2_3_diox"/>
    <property type="match status" value="1"/>
</dbReference>
<dbReference type="PANTHER" id="PTHR10138">
    <property type="entry name" value="TRYPTOPHAN 2,3-DIOXYGENASE"/>
    <property type="match status" value="1"/>
</dbReference>
<dbReference type="PANTHER" id="PTHR10138:SF0">
    <property type="entry name" value="TRYPTOPHAN 2,3-DIOXYGENASE"/>
    <property type="match status" value="1"/>
</dbReference>
<dbReference type="Pfam" id="PF03301">
    <property type="entry name" value="Trp_dioxygenase"/>
    <property type="match status" value="1"/>
</dbReference>
<dbReference type="SUPFAM" id="SSF140959">
    <property type="entry name" value="Indolic compounds 2,3-dioxygenase-like"/>
    <property type="match status" value="1"/>
</dbReference>
<reference key="1">
    <citation type="journal article" date="2008" name="Appl. Environ. Microbiol.">
        <title>The genome of Polaromonas sp. strain JS666: insights into the evolution of a hydrocarbon- and xenobiotic-degrading bacterium, and features of relevance to biotechnology.</title>
        <authorList>
            <person name="Mattes T.E."/>
            <person name="Alexander A.K."/>
            <person name="Richardson P.M."/>
            <person name="Munk A.C."/>
            <person name="Han C.S."/>
            <person name="Stothard P."/>
            <person name="Coleman N.V."/>
        </authorList>
    </citation>
    <scope>NUCLEOTIDE SEQUENCE [LARGE SCALE GENOMIC DNA]</scope>
    <source>
        <strain>JS666 / ATCC BAA-500</strain>
    </source>
</reference>
<name>T23O_POLSJ</name>
<keyword id="KW-0223">Dioxygenase</keyword>
<keyword id="KW-0349">Heme</keyword>
<keyword id="KW-0408">Iron</keyword>
<keyword id="KW-0479">Metal-binding</keyword>
<keyword id="KW-0560">Oxidoreductase</keyword>
<keyword id="KW-1185">Reference proteome</keyword>
<keyword id="KW-0823">Tryptophan catabolism</keyword>
<organism>
    <name type="scientific">Polaromonas sp. (strain JS666 / ATCC BAA-500)</name>
    <dbReference type="NCBI Taxonomy" id="296591"/>
    <lineage>
        <taxon>Bacteria</taxon>
        <taxon>Pseudomonadati</taxon>
        <taxon>Pseudomonadota</taxon>
        <taxon>Betaproteobacteria</taxon>
        <taxon>Burkholderiales</taxon>
        <taxon>Comamonadaceae</taxon>
        <taxon>Polaromonas</taxon>
    </lineage>
</organism>
<sequence>MCPHAHPPAKPDHGATTTPERIVHDEKAQLDFSRDMSYGDYLQLDAILNAQKPLSPAHDEMLFIIQHQTSELWMKLMLHELRAAIANVAADELGSAFKMLARVSRIMEQLVHAWDVLATMTPPEYSAMRPYLGASSGFQSYQYRCIEFALGNKNAAMLQPHAHRSDLLAQVQAAYEAPSLYDEALRLLARRGLAVPASHTERDWTQPYLESAAVEQAWLTVYRDPKQYWDLYQLGEELTDLEDAFRLWRFRHVTTVERIIGFKPGTGGTSGVSYLRKMLDVVLFPEIWKLRTDL</sequence>